<reference key="1">
    <citation type="journal article" date="2009" name="PLoS Genet.">
        <title>Organised genome dynamics in the Escherichia coli species results in highly diverse adaptive paths.</title>
        <authorList>
            <person name="Touchon M."/>
            <person name="Hoede C."/>
            <person name="Tenaillon O."/>
            <person name="Barbe V."/>
            <person name="Baeriswyl S."/>
            <person name="Bidet P."/>
            <person name="Bingen E."/>
            <person name="Bonacorsi S."/>
            <person name="Bouchier C."/>
            <person name="Bouvet O."/>
            <person name="Calteau A."/>
            <person name="Chiapello H."/>
            <person name="Clermont O."/>
            <person name="Cruveiller S."/>
            <person name="Danchin A."/>
            <person name="Diard M."/>
            <person name="Dossat C."/>
            <person name="Karoui M.E."/>
            <person name="Frapy E."/>
            <person name="Garry L."/>
            <person name="Ghigo J.M."/>
            <person name="Gilles A.M."/>
            <person name="Johnson J."/>
            <person name="Le Bouguenec C."/>
            <person name="Lescat M."/>
            <person name="Mangenot S."/>
            <person name="Martinez-Jehanne V."/>
            <person name="Matic I."/>
            <person name="Nassif X."/>
            <person name="Oztas S."/>
            <person name="Petit M.A."/>
            <person name="Pichon C."/>
            <person name="Rouy Z."/>
            <person name="Ruf C.S."/>
            <person name="Schneider D."/>
            <person name="Tourret J."/>
            <person name="Vacherie B."/>
            <person name="Vallenet D."/>
            <person name="Medigue C."/>
            <person name="Rocha E.P.C."/>
            <person name="Denamur E."/>
        </authorList>
    </citation>
    <scope>NUCLEOTIDE SEQUENCE [LARGE SCALE GENOMIC DNA]</scope>
    <source>
        <strain>UMN026 / ExPEC</strain>
    </source>
</reference>
<accession>B7N4U4</accession>
<protein>
    <recommendedName>
        <fullName evidence="1">Trans-aconitate 2-methyltransferase</fullName>
        <ecNumber evidence="1">2.1.1.144</ecNumber>
    </recommendedName>
</protein>
<dbReference type="EC" id="2.1.1.144" evidence="1"/>
<dbReference type="EMBL" id="CU928163">
    <property type="protein sequence ID" value="CAR12988.1"/>
    <property type="molecule type" value="Genomic_DNA"/>
</dbReference>
<dbReference type="RefSeq" id="WP_001286583.1">
    <property type="nucleotide sequence ID" value="NC_011751.1"/>
</dbReference>
<dbReference type="RefSeq" id="YP_002412522.1">
    <property type="nucleotide sequence ID" value="NC_011751.1"/>
</dbReference>
<dbReference type="SMR" id="B7N4U4"/>
<dbReference type="STRING" id="585056.ECUMN_1787"/>
<dbReference type="KEGG" id="eum:ECUMN_1787"/>
<dbReference type="PATRIC" id="fig|585056.7.peg.1973"/>
<dbReference type="HOGENOM" id="CLU_037990_5_2_6"/>
<dbReference type="Proteomes" id="UP000007097">
    <property type="component" value="Chromosome"/>
</dbReference>
<dbReference type="GO" id="GO:0005737">
    <property type="term" value="C:cytoplasm"/>
    <property type="evidence" value="ECO:0007669"/>
    <property type="project" value="UniProtKB-SubCell"/>
</dbReference>
<dbReference type="GO" id="GO:0030798">
    <property type="term" value="F:trans-aconitate 2-methyltransferase activity"/>
    <property type="evidence" value="ECO:0007669"/>
    <property type="project" value="UniProtKB-UniRule"/>
</dbReference>
<dbReference type="GO" id="GO:0032259">
    <property type="term" value="P:methylation"/>
    <property type="evidence" value="ECO:0007669"/>
    <property type="project" value="UniProtKB-KW"/>
</dbReference>
<dbReference type="CDD" id="cd02440">
    <property type="entry name" value="AdoMet_MTases"/>
    <property type="match status" value="1"/>
</dbReference>
<dbReference type="Gene3D" id="1.10.150.290">
    <property type="entry name" value="S-adenosyl-L-methionine-dependent methyltransferases"/>
    <property type="match status" value="1"/>
</dbReference>
<dbReference type="Gene3D" id="3.40.50.150">
    <property type="entry name" value="Vaccinia Virus protein VP39"/>
    <property type="match status" value="1"/>
</dbReference>
<dbReference type="HAMAP" id="MF_00560">
    <property type="entry name" value="Tran_acon_Me_trans"/>
    <property type="match status" value="1"/>
</dbReference>
<dbReference type="InterPro" id="IPR041698">
    <property type="entry name" value="Methyltransf_25"/>
</dbReference>
<dbReference type="InterPro" id="IPR029063">
    <property type="entry name" value="SAM-dependent_MTases_sf"/>
</dbReference>
<dbReference type="InterPro" id="IPR023506">
    <property type="entry name" value="Trans-aconitate_MeTrfase"/>
</dbReference>
<dbReference type="InterPro" id="IPR023149">
    <property type="entry name" value="Trans_acon_MeTrfase_C"/>
</dbReference>
<dbReference type="NCBIfam" id="NF002463">
    <property type="entry name" value="PRK01683.1"/>
    <property type="match status" value="1"/>
</dbReference>
<dbReference type="PANTHER" id="PTHR43861:SF1">
    <property type="entry name" value="TRANS-ACONITATE 2-METHYLTRANSFERASE"/>
    <property type="match status" value="1"/>
</dbReference>
<dbReference type="PANTHER" id="PTHR43861">
    <property type="entry name" value="TRANS-ACONITATE 2-METHYLTRANSFERASE-RELATED"/>
    <property type="match status" value="1"/>
</dbReference>
<dbReference type="Pfam" id="PF13649">
    <property type="entry name" value="Methyltransf_25"/>
    <property type="match status" value="1"/>
</dbReference>
<dbReference type="SUPFAM" id="SSF53335">
    <property type="entry name" value="S-adenosyl-L-methionine-dependent methyltransferases"/>
    <property type="match status" value="1"/>
</dbReference>
<name>TAM_ECOLU</name>
<feature type="chain" id="PRO_1000129255" description="Trans-aconitate 2-methyltransferase">
    <location>
        <begin position="1"/>
        <end position="252"/>
    </location>
</feature>
<keyword id="KW-0963">Cytoplasm</keyword>
<keyword id="KW-0489">Methyltransferase</keyword>
<keyword id="KW-0949">S-adenosyl-L-methionine</keyword>
<keyword id="KW-0808">Transferase</keyword>
<gene>
    <name evidence="1" type="primary">tam</name>
    <name type="ordered locus">ECUMN_1787</name>
</gene>
<proteinExistence type="inferred from homology"/>
<comment type="function">
    <text evidence="1">Catalyzes the S-adenosylmethionine monomethyl esterification of trans-aconitate.</text>
</comment>
<comment type="catalytic activity">
    <reaction evidence="1">
        <text>trans-aconitate + S-adenosyl-L-methionine = (E)-3-(methoxycarbonyl)pent-2-enedioate + S-adenosyl-L-homocysteine</text>
        <dbReference type="Rhea" id="RHEA:14969"/>
        <dbReference type="ChEBI" id="CHEBI:15708"/>
        <dbReference type="ChEBI" id="CHEBI:57470"/>
        <dbReference type="ChEBI" id="CHEBI:57856"/>
        <dbReference type="ChEBI" id="CHEBI:59789"/>
        <dbReference type="EC" id="2.1.1.144"/>
    </reaction>
</comment>
<comment type="subcellular location">
    <subcellularLocation>
        <location evidence="1">Cytoplasm</location>
    </subcellularLocation>
</comment>
<comment type="similarity">
    <text evidence="1">Belongs to the methyltransferase superfamily. Tam family.</text>
</comment>
<sequence length="252" mass="28915">MSDWNPSLYLHFAAERSRPAVELLARVPLENVEYVADLGCGPGNSTALLQQRWPAARITGIDSSPAMVAEARSALPDCLFVEADIRNWQPEQALDLIFANASLQWLPDHYELFPHLVSLLSPLGVLAVQMPDNWLEPTHVLMREVAWEQNYPDRGREPLAGVHAYYDILSEAGCEVDIWRTTYYHQMPSHQAIINWVTATGLRPWLQDLTESEQQHFLTRYHQMLEEQYPLQENGQILLAFPRLFIVARRTE</sequence>
<evidence type="ECO:0000255" key="1">
    <source>
        <dbReference type="HAMAP-Rule" id="MF_00560"/>
    </source>
</evidence>
<organism>
    <name type="scientific">Escherichia coli O17:K52:H18 (strain UMN026 / ExPEC)</name>
    <dbReference type="NCBI Taxonomy" id="585056"/>
    <lineage>
        <taxon>Bacteria</taxon>
        <taxon>Pseudomonadati</taxon>
        <taxon>Pseudomonadota</taxon>
        <taxon>Gammaproteobacteria</taxon>
        <taxon>Enterobacterales</taxon>
        <taxon>Enterobacteriaceae</taxon>
        <taxon>Escherichia</taxon>
    </lineage>
</organism>